<organism>
    <name type="scientific">Pyrococcus furiosus (strain ATCC 43587 / DSM 3638 / JCM 8422 / Vc1)</name>
    <dbReference type="NCBI Taxonomy" id="186497"/>
    <lineage>
        <taxon>Archaea</taxon>
        <taxon>Methanobacteriati</taxon>
        <taxon>Methanobacteriota</taxon>
        <taxon>Thermococci</taxon>
        <taxon>Thermococcales</taxon>
        <taxon>Thermococcaceae</taxon>
        <taxon>Pyrococcus</taxon>
    </lineage>
</organism>
<sequence length="190" mass="21338">MKKIILASSSPRRREILSRFFDIIVHPSNVNEDKIKEKDPTETAIKIAKAKAFDLAVKFPTDTIIAADTIVTLNGKILGKPKDSEEARKMLKQLSGKTHEVVTGYCIISGDKIIEGAEITKVKFRELSDDLIEWYISTQEWRDKAGGYGIQGFGAILVEHIEGDYYNVVGLPIIVIIKLIELGHKLKRIF</sequence>
<name>NTPPA_PYRFU</name>
<protein>
    <recommendedName>
        <fullName evidence="1">dTTP/UTP pyrophosphatase</fullName>
        <shortName evidence="1">dTTPase/UTPase</shortName>
        <ecNumber evidence="1">3.6.1.9</ecNumber>
    </recommendedName>
    <alternativeName>
        <fullName evidence="1">Nucleoside triphosphate pyrophosphatase</fullName>
    </alternativeName>
    <alternativeName>
        <fullName evidence="1">Nucleotide pyrophosphatase</fullName>
        <shortName evidence="1">Nucleotide PPase</shortName>
    </alternativeName>
</protein>
<comment type="function">
    <text evidence="1">Nucleoside triphosphate pyrophosphatase that hydrolyzes dTTP and UTP. May have a dual role in cell division arrest and in preventing the incorporation of modified nucleotides into cellular nucleic acids.</text>
</comment>
<comment type="catalytic activity">
    <reaction evidence="1">
        <text>dTTP + H2O = dTMP + diphosphate + H(+)</text>
        <dbReference type="Rhea" id="RHEA:28534"/>
        <dbReference type="ChEBI" id="CHEBI:15377"/>
        <dbReference type="ChEBI" id="CHEBI:15378"/>
        <dbReference type="ChEBI" id="CHEBI:33019"/>
        <dbReference type="ChEBI" id="CHEBI:37568"/>
        <dbReference type="ChEBI" id="CHEBI:63528"/>
        <dbReference type="EC" id="3.6.1.9"/>
    </reaction>
</comment>
<comment type="catalytic activity">
    <reaction evidence="1">
        <text>UTP + H2O = UMP + diphosphate + H(+)</text>
        <dbReference type="Rhea" id="RHEA:29395"/>
        <dbReference type="ChEBI" id="CHEBI:15377"/>
        <dbReference type="ChEBI" id="CHEBI:15378"/>
        <dbReference type="ChEBI" id="CHEBI:33019"/>
        <dbReference type="ChEBI" id="CHEBI:46398"/>
        <dbReference type="ChEBI" id="CHEBI:57865"/>
        <dbReference type="EC" id="3.6.1.9"/>
    </reaction>
</comment>
<comment type="cofactor">
    <cofactor evidence="1">
        <name>a divalent metal cation</name>
        <dbReference type="ChEBI" id="CHEBI:60240"/>
    </cofactor>
</comment>
<comment type="subcellular location">
    <subcellularLocation>
        <location evidence="1">Cytoplasm</location>
    </subcellularLocation>
</comment>
<comment type="similarity">
    <text evidence="1">Belongs to the Maf family. YhdE subfamily.</text>
</comment>
<dbReference type="EC" id="3.6.1.9" evidence="1"/>
<dbReference type="EMBL" id="AE009950">
    <property type="protein sequence ID" value="AAL80340.1"/>
    <property type="molecule type" value="Genomic_DNA"/>
</dbReference>
<dbReference type="RefSeq" id="WP_011011329.1">
    <property type="nucleotide sequence ID" value="NZ_CP023154.1"/>
</dbReference>
<dbReference type="SMR" id="Q8U476"/>
<dbReference type="STRING" id="186497.PF0216"/>
<dbReference type="PaxDb" id="186497-PF0216"/>
<dbReference type="KEGG" id="pfu:PF0216"/>
<dbReference type="PATRIC" id="fig|186497.12.peg.224"/>
<dbReference type="eggNOG" id="arCOG05007">
    <property type="taxonomic scope" value="Archaea"/>
</dbReference>
<dbReference type="HOGENOM" id="CLU_040416_0_0_2"/>
<dbReference type="OrthoDB" id="45223at2157"/>
<dbReference type="PhylomeDB" id="Q8U476"/>
<dbReference type="Proteomes" id="UP000001013">
    <property type="component" value="Chromosome"/>
</dbReference>
<dbReference type="GO" id="GO:0005737">
    <property type="term" value="C:cytoplasm"/>
    <property type="evidence" value="ECO:0007669"/>
    <property type="project" value="UniProtKB-SubCell"/>
</dbReference>
<dbReference type="GO" id="GO:0036218">
    <property type="term" value="F:dTTP diphosphatase activity"/>
    <property type="evidence" value="ECO:0007669"/>
    <property type="project" value="RHEA"/>
</dbReference>
<dbReference type="GO" id="GO:0036221">
    <property type="term" value="F:UTP diphosphatase activity"/>
    <property type="evidence" value="ECO:0007669"/>
    <property type="project" value="RHEA"/>
</dbReference>
<dbReference type="GO" id="GO:0009117">
    <property type="term" value="P:nucleotide metabolic process"/>
    <property type="evidence" value="ECO:0007669"/>
    <property type="project" value="UniProtKB-KW"/>
</dbReference>
<dbReference type="CDD" id="cd00555">
    <property type="entry name" value="Maf"/>
    <property type="match status" value="1"/>
</dbReference>
<dbReference type="Gene3D" id="3.90.950.10">
    <property type="match status" value="1"/>
</dbReference>
<dbReference type="HAMAP" id="MF_00528">
    <property type="entry name" value="Maf"/>
    <property type="match status" value="1"/>
</dbReference>
<dbReference type="InterPro" id="IPR029001">
    <property type="entry name" value="ITPase-like_fam"/>
</dbReference>
<dbReference type="InterPro" id="IPR003697">
    <property type="entry name" value="Maf-like"/>
</dbReference>
<dbReference type="NCBIfam" id="TIGR00172">
    <property type="entry name" value="maf"/>
    <property type="match status" value="1"/>
</dbReference>
<dbReference type="PANTHER" id="PTHR43213">
    <property type="entry name" value="BIFUNCTIONAL DTTP/UTP PYROPHOSPHATASE/METHYLTRANSFERASE PROTEIN-RELATED"/>
    <property type="match status" value="1"/>
</dbReference>
<dbReference type="PANTHER" id="PTHR43213:SF5">
    <property type="entry name" value="BIFUNCTIONAL DTTP_UTP PYROPHOSPHATASE_METHYLTRANSFERASE PROTEIN-RELATED"/>
    <property type="match status" value="1"/>
</dbReference>
<dbReference type="Pfam" id="PF02545">
    <property type="entry name" value="Maf"/>
    <property type="match status" value="1"/>
</dbReference>
<dbReference type="PIRSF" id="PIRSF006305">
    <property type="entry name" value="Maf"/>
    <property type="match status" value="1"/>
</dbReference>
<dbReference type="SUPFAM" id="SSF52972">
    <property type="entry name" value="ITPase-like"/>
    <property type="match status" value="1"/>
</dbReference>
<accession>Q8U476</accession>
<evidence type="ECO:0000255" key="1">
    <source>
        <dbReference type="HAMAP-Rule" id="MF_00528"/>
    </source>
</evidence>
<reference key="1">
    <citation type="journal article" date="1999" name="Genetics">
        <title>Divergence of the hyperthermophilic archaea Pyrococcus furiosus and P. horikoshii inferred from complete genomic sequences.</title>
        <authorList>
            <person name="Maeder D.L."/>
            <person name="Weiss R.B."/>
            <person name="Dunn D.M."/>
            <person name="Cherry J.L."/>
            <person name="Gonzalez J.M."/>
            <person name="DiRuggiero J."/>
            <person name="Robb F.T."/>
        </authorList>
    </citation>
    <scope>NUCLEOTIDE SEQUENCE [LARGE SCALE GENOMIC DNA]</scope>
    <source>
        <strain>ATCC 43587 / DSM 3638 / JCM 8422 / Vc1</strain>
    </source>
</reference>
<proteinExistence type="inferred from homology"/>
<gene>
    <name type="ordered locus">PF0216</name>
</gene>
<feature type="chain" id="PRO_0000123087" description="dTTP/UTP pyrophosphatase">
    <location>
        <begin position="1"/>
        <end position="190"/>
    </location>
</feature>
<feature type="active site" description="Proton acceptor" evidence="1">
    <location>
        <position position="68"/>
    </location>
</feature>
<feature type="site" description="Important for substrate specificity" evidence="1">
    <location>
        <position position="12"/>
    </location>
</feature>
<feature type="site" description="Important for substrate specificity" evidence="1">
    <location>
        <position position="69"/>
    </location>
</feature>
<feature type="site" description="Important for substrate specificity" evidence="1">
    <location>
        <position position="151"/>
    </location>
</feature>
<keyword id="KW-0963">Cytoplasm</keyword>
<keyword id="KW-0378">Hydrolase</keyword>
<keyword id="KW-0546">Nucleotide metabolism</keyword>
<keyword id="KW-1185">Reference proteome</keyword>